<name>ATP6_OSPRO</name>
<organism>
    <name type="scientific">Osphranter robustus</name>
    <name type="common">Wallaroo</name>
    <name type="synonym">Macropus robustus</name>
    <dbReference type="NCBI Taxonomy" id="9319"/>
    <lineage>
        <taxon>Eukaryota</taxon>
        <taxon>Metazoa</taxon>
        <taxon>Chordata</taxon>
        <taxon>Craniata</taxon>
        <taxon>Vertebrata</taxon>
        <taxon>Euteleostomi</taxon>
        <taxon>Mammalia</taxon>
        <taxon>Metatheria</taxon>
        <taxon>Diprotodontia</taxon>
        <taxon>Macropodidae</taxon>
        <taxon>Osphranter</taxon>
    </lineage>
</organism>
<sequence length="226" mass="25101">MNENLFATFITPTILGITTLPIIMLFPCLLLTSPKRWLPNRIQILQVWLIRLITKQMLTIHNKQGRSWALMLMSLILFIASTNLLGLLPYSFTPTTQLSMNIGMAIPLWLATVLMGFRNKPKISLAHFLPQGTPTPLVPMLIIIETISLFIQPVALAVRLTANITAGHLLIHLIGSATLALCSISVTVSTITFIILFLLTILELAVAMIQAYVFTLLVSLYLHDNS</sequence>
<comment type="function">
    <text evidence="1">Subunit a, of the mitochondrial membrane ATP synthase complex (F(1)F(0) ATP synthase or Complex V) that produces ATP from ADP in the presence of a proton gradient across the membrane which is generated by electron transport complexes of the respiratory chain. ATP synthase complex consist of a soluble F(1) head domain - the catalytic core - and a membrane F(1) domain - the membrane proton channel. These two domains are linked by a central stalk rotating inside the F(1) region and a stationary peripheral stalk. During catalysis, ATP synthesis in the catalytic domain of F(1) is coupled via a rotary mechanism of the central stalk subunits to proton translocation. With the subunit c (ATP5MC1), forms the proton-conducting channel in the F(0) domain, that contains two crucial half-channels (inlet and outlet) that facilitate proton movement from the mitochondrial intermembrane space (IMS) into the matrix. Protons are taken up via the inlet half-channel and released through the outlet half-channel, following a Grotthuss mechanism.</text>
</comment>
<comment type="catalytic activity">
    <reaction evidence="1">
        <text>H(+)(in) = H(+)(out)</text>
        <dbReference type="Rhea" id="RHEA:34979"/>
        <dbReference type="ChEBI" id="CHEBI:15378"/>
    </reaction>
</comment>
<comment type="subunit">
    <text evidence="1">Component of the ATP synthase complex composed at least of ATP5F1A/subunit alpha, ATP5F1B/subunit beta, ATP5MC1/subunit c (homooctomer), MT-ATP6/subunit a, MT-ATP8/subunit 8, ATP5ME/subunit e, ATP5MF/subunit f, ATP5MG/subunit g, ATP5MK/subunit k, ATP5MJ/subunit j, ATP5F1C/subunit gamma, ATP5F1D/subunit delta, ATP5F1E/subunit epsilon, ATP5PF/subunit F6, ATP5PB/subunit b, ATP5PD/subunit d, ATP5PO/subunit OSCP. ATP synthase complex consists of a soluble F(1) head domain (subunits alpha(3) and beta(3)) - the catalytic core - and a membrane F(0) domain - the membrane proton channel (subunits c, a, 8, e, f, g, k and j). These two domains are linked by a central stalk (subunits gamma, delta, and epsilon) rotating inside the F1 region and a stationary peripheral stalk (subunits F6, b, d, and OSCP). Interacts with DNAJC30; interaction is direct.</text>
</comment>
<comment type="subcellular location">
    <subcellularLocation>
        <location>Mitochondrion inner membrane</location>
        <topology>Multi-pass membrane protein</topology>
    </subcellularLocation>
</comment>
<comment type="similarity">
    <text evidence="3">Belongs to the ATPase A chain family.</text>
</comment>
<protein>
    <recommendedName>
        <fullName evidence="1">ATP synthase F(0) complex subunit a</fullName>
    </recommendedName>
    <alternativeName>
        <fullName>F-ATPase protein 6</fullName>
    </alternativeName>
    <alternativeName>
        <fullName evidence="1">Proton-conducting channel, ATP synthase F(0) complex subunit a</fullName>
    </alternativeName>
</protein>
<geneLocation type="mitochondrion"/>
<reference key="1">
    <citation type="journal article" date="1997" name="Proc. Natl. Acad. Sci. U.S.A.">
        <title>The complete mitochondrial genome of the wallaroo (Macropus robustus) and the phylogenetic relationship among Monotremata, Marsupialia, and Eutheria.</title>
        <authorList>
            <person name="Janke A."/>
            <person name="Xu X."/>
            <person name="Arnason U."/>
        </authorList>
    </citation>
    <scope>NUCLEOTIDE SEQUENCE [GENOMIC DNA]</scope>
</reference>
<proteinExistence type="inferred from homology"/>
<gene>
    <name evidence="1" type="primary">MT-ATP6</name>
    <name type="synonym">ATP6</name>
    <name type="synonym">ATPASE6</name>
    <name type="synonym">MTATP6</name>
</gene>
<feature type="chain" id="PRO_0000082135" description="ATP synthase F(0) complex subunit a">
    <location>
        <begin position="1"/>
        <end position="226"/>
    </location>
</feature>
<feature type="transmembrane region" description="Helical" evidence="2">
    <location>
        <begin position="6"/>
        <end position="26"/>
    </location>
</feature>
<feature type="transmembrane region" description="Helical" evidence="2">
    <location>
        <begin position="68"/>
        <end position="88"/>
    </location>
</feature>
<feature type="transmembrane region" description="Helical" evidence="2">
    <location>
        <begin position="97"/>
        <end position="117"/>
    </location>
</feature>
<feature type="transmembrane region" description="Helical" evidence="2">
    <location>
        <begin position="138"/>
        <end position="158"/>
    </location>
</feature>
<feature type="transmembrane region" description="Helical" evidence="2">
    <location>
        <begin position="164"/>
        <end position="184"/>
    </location>
</feature>
<feature type="transmembrane region" description="Helical" evidence="2">
    <location>
        <begin position="193"/>
        <end position="213"/>
    </location>
</feature>
<evidence type="ECO:0000250" key="1">
    <source>
        <dbReference type="UniProtKB" id="P00846"/>
    </source>
</evidence>
<evidence type="ECO:0000255" key="2"/>
<evidence type="ECO:0000305" key="3"/>
<dbReference type="EMBL" id="Y10524">
    <property type="protein sequence ID" value="CAA71541.1"/>
    <property type="molecule type" value="Genomic_DNA"/>
</dbReference>
<dbReference type="PIR" id="T11433">
    <property type="entry name" value="T11433"/>
</dbReference>
<dbReference type="RefSeq" id="NP_007399.1">
    <property type="nucleotide sequence ID" value="NC_001794.1"/>
</dbReference>
<dbReference type="SMR" id="P92664"/>
<dbReference type="GeneID" id="808078"/>
<dbReference type="CTD" id="4508"/>
<dbReference type="GO" id="GO:0005743">
    <property type="term" value="C:mitochondrial inner membrane"/>
    <property type="evidence" value="ECO:0007669"/>
    <property type="project" value="UniProtKB-SubCell"/>
</dbReference>
<dbReference type="GO" id="GO:0045259">
    <property type="term" value="C:proton-transporting ATP synthase complex"/>
    <property type="evidence" value="ECO:0000250"/>
    <property type="project" value="UniProtKB"/>
</dbReference>
<dbReference type="GO" id="GO:0015252">
    <property type="term" value="F:proton channel activity"/>
    <property type="evidence" value="ECO:0000250"/>
    <property type="project" value="UniProtKB"/>
</dbReference>
<dbReference type="GO" id="GO:0046933">
    <property type="term" value="F:proton-transporting ATP synthase activity, rotational mechanism"/>
    <property type="evidence" value="ECO:0007669"/>
    <property type="project" value="TreeGrafter"/>
</dbReference>
<dbReference type="GO" id="GO:0015986">
    <property type="term" value="P:proton motive force-driven ATP synthesis"/>
    <property type="evidence" value="ECO:0000250"/>
    <property type="project" value="UniProtKB"/>
</dbReference>
<dbReference type="GO" id="GO:1902600">
    <property type="term" value="P:proton transmembrane transport"/>
    <property type="evidence" value="ECO:0000250"/>
    <property type="project" value="UniProtKB"/>
</dbReference>
<dbReference type="CDD" id="cd00310">
    <property type="entry name" value="ATP-synt_Fo_a_6"/>
    <property type="match status" value="1"/>
</dbReference>
<dbReference type="FunFam" id="1.20.120.220:FF:000004">
    <property type="entry name" value="ATP synthase subunit a"/>
    <property type="match status" value="1"/>
</dbReference>
<dbReference type="Gene3D" id="1.20.120.220">
    <property type="entry name" value="ATP synthase, F0 complex, subunit A"/>
    <property type="match status" value="1"/>
</dbReference>
<dbReference type="InterPro" id="IPR000568">
    <property type="entry name" value="ATP_synth_F0_asu"/>
</dbReference>
<dbReference type="InterPro" id="IPR023011">
    <property type="entry name" value="ATP_synth_F0_asu_AS"/>
</dbReference>
<dbReference type="InterPro" id="IPR045083">
    <property type="entry name" value="ATP_synth_F0_asu_bact/mt"/>
</dbReference>
<dbReference type="InterPro" id="IPR035908">
    <property type="entry name" value="F0_ATP_A_sf"/>
</dbReference>
<dbReference type="NCBIfam" id="TIGR01131">
    <property type="entry name" value="ATP_synt_6_or_A"/>
    <property type="match status" value="1"/>
</dbReference>
<dbReference type="PANTHER" id="PTHR11410">
    <property type="entry name" value="ATP SYNTHASE SUBUNIT A"/>
    <property type="match status" value="1"/>
</dbReference>
<dbReference type="PANTHER" id="PTHR11410:SF0">
    <property type="entry name" value="ATP SYNTHASE SUBUNIT A"/>
    <property type="match status" value="1"/>
</dbReference>
<dbReference type="Pfam" id="PF00119">
    <property type="entry name" value="ATP-synt_A"/>
    <property type="match status" value="1"/>
</dbReference>
<dbReference type="PRINTS" id="PR00123">
    <property type="entry name" value="ATPASEA"/>
</dbReference>
<dbReference type="SUPFAM" id="SSF81336">
    <property type="entry name" value="F1F0 ATP synthase subunit A"/>
    <property type="match status" value="1"/>
</dbReference>
<dbReference type="PROSITE" id="PS00449">
    <property type="entry name" value="ATPASE_A"/>
    <property type="match status" value="1"/>
</dbReference>
<keyword id="KW-0066">ATP synthesis</keyword>
<keyword id="KW-0138">CF(0)</keyword>
<keyword id="KW-0375">Hydrogen ion transport</keyword>
<keyword id="KW-0406">Ion transport</keyword>
<keyword id="KW-0472">Membrane</keyword>
<keyword id="KW-0496">Mitochondrion</keyword>
<keyword id="KW-0999">Mitochondrion inner membrane</keyword>
<keyword id="KW-0812">Transmembrane</keyword>
<keyword id="KW-1133">Transmembrane helix</keyword>
<keyword id="KW-0813">Transport</keyword>
<accession>P92664</accession>